<evidence type="ECO:0000255" key="1">
    <source>
        <dbReference type="HAMAP-Rule" id="MF_00675"/>
    </source>
</evidence>
<sequence>MAFINEHFMLNNETGKHLYHDFAKDMPIYDYHCHLDPKQISDNVACDNITDLWLSGDHYKWRAMRAQGIEEQYITGDAAPLDKFKKWTETLENSVGNPLYHWSQLELKMYFDIEDLLTSDNAEAIYHRANDYLKQHHTTTQSLITDSNVNLICTTDNPTDDLNYHDAIKAKDGFNTTVLPAFRPDDVFKVGDPAFTDLLQKLENLTHPITTPSDFIEALYKRIQYFHDKGGRLADHGLEEMHFEAYTDQAIQDIFKKALNHADISTYERFQFQSYMLNELSKAYYERGWVMQIHFGAIRNNNTKMFEKVGKDAGFDSIRDQDNLAYHLNATLDMMEQEGHLPKTILYNLNPIYNDIVGSTIANFQTEPGIKSKVQHGAGWWFNDTKRGMLRQMSSLADQGLLMHFVGMLTDSRSFISYSRHDYFRRILSSFIGDLVEKGEIPNDDQLLKRMIENICYNNAYNYFKLI</sequence>
<proteinExistence type="inferred from homology"/>
<protein>
    <recommendedName>
        <fullName evidence="1">Uronate isomerase</fullName>
        <ecNumber evidence="1">5.3.1.12</ecNumber>
    </recommendedName>
    <alternativeName>
        <fullName evidence="1">Glucuronate isomerase</fullName>
    </alternativeName>
    <alternativeName>
        <fullName evidence="1">Uronic isomerase</fullName>
    </alternativeName>
</protein>
<feature type="chain" id="PRO_1000044779" description="Uronate isomerase">
    <location>
        <begin position="1"/>
        <end position="467"/>
    </location>
</feature>
<reference key="1">
    <citation type="journal article" date="2005" name="J. Bacteriol.">
        <title>Whole-genome sequencing of Staphylococcus haemolyticus uncovers the extreme plasticity of its genome and the evolution of human-colonizing staphylococcal species.</title>
        <authorList>
            <person name="Takeuchi F."/>
            <person name="Watanabe S."/>
            <person name="Baba T."/>
            <person name="Yuzawa H."/>
            <person name="Ito T."/>
            <person name="Morimoto Y."/>
            <person name="Kuroda M."/>
            <person name="Cui L."/>
            <person name="Takahashi M."/>
            <person name="Ankai A."/>
            <person name="Baba S."/>
            <person name="Fukui S."/>
            <person name="Lee J.C."/>
            <person name="Hiramatsu K."/>
        </authorList>
    </citation>
    <scope>NUCLEOTIDE SEQUENCE [LARGE SCALE GENOMIC DNA]</scope>
    <source>
        <strain>JCSC1435</strain>
    </source>
</reference>
<dbReference type="EC" id="5.3.1.12" evidence="1"/>
<dbReference type="EMBL" id="AP006716">
    <property type="protein sequence ID" value="BAE05957.1"/>
    <property type="molecule type" value="Genomic_DNA"/>
</dbReference>
<dbReference type="RefSeq" id="WP_011276887.1">
    <property type="nucleotide sequence ID" value="NC_007168.1"/>
</dbReference>
<dbReference type="SMR" id="Q4L320"/>
<dbReference type="KEGG" id="sha:SH2648"/>
<dbReference type="eggNOG" id="COG1904">
    <property type="taxonomic scope" value="Bacteria"/>
</dbReference>
<dbReference type="HOGENOM" id="CLU_044465_1_0_9"/>
<dbReference type="OrthoDB" id="9766564at2"/>
<dbReference type="UniPathway" id="UPA00246"/>
<dbReference type="Proteomes" id="UP000000543">
    <property type="component" value="Chromosome"/>
</dbReference>
<dbReference type="GO" id="GO:0008880">
    <property type="term" value="F:glucuronate isomerase activity"/>
    <property type="evidence" value="ECO:0007669"/>
    <property type="project" value="UniProtKB-UniRule"/>
</dbReference>
<dbReference type="GO" id="GO:0019698">
    <property type="term" value="P:D-galacturonate catabolic process"/>
    <property type="evidence" value="ECO:0007669"/>
    <property type="project" value="TreeGrafter"/>
</dbReference>
<dbReference type="GO" id="GO:0042840">
    <property type="term" value="P:D-glucuronate catabolic process"/>
    <property type="evidence" value="ECO:0007669"/>
    <property type="project" value="TreeGrafter"/>
</dbReference>
<dbReference type="Gene3D" id="3.20.20.140">
    <property type="entry name" value="Metal-dependent hydrolases"/>
    <property type="match status" value="1"/>
</dbReference>
<dbReference type="Gene3D" id="1.10.2020.10">
    <property type="entry name" value="uronate isomerase, domain 2, chain A"/>
    <property type="match status" value="1"/>
</dbReference>
<dbReference type="HAMAP" id="MF_00675">
    <property type="entry name" value="UxaC"/>
    <property type="match status" value="1"/>
</dbReference>
<dbReference type="InterPro" id="IPR032466">
    <property type="entry name" value="Metal_Hydrolase"/>
</dbReference>
<dbReference type="InterPro" id="IPR003766">
    <property type="entry name" value="Uronate_isomerase"/>
</dbReference>
<dbReference type="NCBIfam" id="NF002794">
    <property type="entry name" value="PRK02925.1"/>
    <property type="match status" value="1"/>
</dbReference>
<dbReference type="PANTHER" id="PTHR30068">
    <property type="entry name" value="URONATE ISOMERASE"/>
    <property type="match status" value="1"/>
</dbReference>
<dbReference type="PANTHER" id="PTHR30068:SF4">
    <property type="entry name" value="URONATE ISOMERASE"/>
    <property type="match status" value="1"/>
</dbReference>
<dbReference type="Pfam" id="PF02614">
    <property type="entry name" value="UxaC"/>
    <property type="match status" value="1"/>
</dbReference>
<dbReference type="SUPFAM" id="SSF51556">
    <property type="entry name" value="Metallo-dependent hydrolases"/>
    <property type="match status" value="1"/>
</dbReference>
<name>UXAC_STAHJ</name>
<keyword id="KW-0413">Isomerase</keyword>
<gene>
    <name evidence="1" type="primary">uxaC</name>
    <name type="ordered locus">SH2648</name>
</gene>
<organism>
    <name type="scientific">Staphylococcus haemolyticus (strain JCSC1435)</name>
    <dbReference type="NCBI Taxonomy" id="279808"/>
    <lineage>
        <taxon>Bacteria</taxon>
        <taxon>Bacillati</taxon>
        <taxon>Bacillota</taxon>
        <taxon>Bacilli</taxon>
        <taxon>Bacillales</taxon>
        <taxon>Staphylococcaceae</taxon>
        <taxon>Staphylococcus</taxon>
    </lineage>
</organism>
<accession>Q4L320</accession>
<comment type="catalytic activity">
    <reaction evidence="1">
        <text>D-glucuronate = D-fructuronate</text>
        <dbReference type="Rhea" id="RHEA:13049"/>
        <dbReference type="ChEBI" id="CHEBI:58720"/>
        <dbReference type="ChEBI" id="CHEBI:59863"/>
        <dbReference type="EC" id="5.3.1.12"/>
    </reaction>
</comment>
<comment type="catalytic activity">
    <reaction evidence="1">
        <text>aldehydo-D-galacturonate = keto-D-tagaturonate</text>
        <dbReference type="Rhea" id="RHEA:27702"/>
        <dbReference type="ChEBI" id="CHEBI:12952"/>
        <dbReference type="ChEBI" id="CHEBI:17886"/>
        <dbReference type="EC" id="5.3.1.12"/>
    </reaction>
</comment>
<comment type="pathway">
    <text evidence="1">Carbohydrate metabolism; pentose and glucuronate interconversion.</text>
</comment>
<comment type="similarity">
    <text evidence="1">Belongs to the metallo-dependent hydrolases superfamily. Uronate isomerase family.</text>
</comment>